<accession>Q6HK31</accession>
<comment type="function">
    <text evidence="1">Catalyzes the conversion of lactate to pyruvate.</text>
</comment>
<comment type="catalytic activity">
    <reaction evidence="1">
        <text>(S)-lactate + NAD(+) = pyruvate + NADH + H(+)</text>
        <dbReference type="Rhea" id="RHEA:23444"/>
        <dbReference type="ChEBI" id="CHEBI:15361"/>
        <dbReference type="ChEBI" id="CHEBI:15378"/>
        <dbReference type="ChEBI" id="CHEBI:16651"/>
        <dbReference type="ChEBI" id="CHEBI:57540"/>
        <dbReference type="ChEBI" id="CHEBI:57945"/>
        <dbReference type="EC" id="1.1.1.27"/>
    </reaction>
</comment>
<comment type="activity regulation">
    <text evidence="1">Allosterically activated by fructose 1,6-bisphosphate (FBP).</text>
</comment>
<comment type="pathway">
    <text evidence="1">Fermentation; pyruvate fermentation to lactate; (S)-lactate from pyruvate: step 1/1.</text>
</comment>
<comment type="subunit">
    <text evidence="1">Homotetramer.</text>
</comment>
<comment type="subcellular location">
    <subcellularLocation>
        <location evidence="1">Cytoplasm</location>
    </subcellularLocation>
</comment>
<comment type="similarity">
    <text evidence="1">Belongs to the LDH/MDH superfamily. LDH family.</text>
</comment>
<sequence length="314" mass="34788">MKKGINRVVLVGTGAVGCSYAYCMINQAVAEEFVLVDVNEAKAEGEAMDLSHAVPFAPAPTRVWKGSYEDCKDADLVVITAGLPQKPGETRLDLVEKNAKIFKQIVRSIMDSGFDGIFLIATNPVDILTYVTWKESGLPKERVIGSGTTLDSARFRYMLGEYFNIGPHNIHAYIIGEHGDTELPVWSHVSVGIQKLQTLLEKDNTYNQEDLDKIFINVRDAAYHIIERKGATYYGIGMSLLRVTKAILNDENSVLTVSAYLEGQYGQKDVYIGVPAVLNRGGVREILEVELSEDEELKFDHSVQVLKETMAPVL</sequence>
<reference key="1">
    <citation type="journal article" date="2006" name="J. Bacteriol.">
        <title>Pathogenomic sequence analysis of Bacillus cereus and Bacillus thuringiensis isolates closely related to Bacillus anthracis.</title>
        <authorList>
            <person name="Han C.S."/>
            <person name="Xie G."/>
            <person name="Challacombe J.F."/>
            <person name="Altherr M.R."/>
            <person name="Bhotika S.S."/>
            <person name="Bruce D."/>
            <person name="Campbell C.S."/>
            <person name="Campbell M.L."/>
            <person name="Chen J."/>
            <person name="Chertkov O."/>
            <person name="Cleland C."/>
            <person name="Dimitrijevic M."/>
            <person name="Doggett N.A."/>
            <person name="Fawcett J.J."/>
            <person name="Glavina T."/>
            <person name="Goodwin L.A."/>
            <person name="Hill K.K."/>
            <person name="Hitchcock P."/>
            <person name="Jackson P.J."/>
            <person name="Keim P."/>
            <person name="Kewalramani A.R."/>
            <person name="Longmire J."/>
            <person name="Lucas S."/>
            <person name="Malfatti S."/>
            <person name="McMurry K."/>
            <person name="Meincke L.J."/>
            <person name="Misra M."/>
            <person name="Moseman B.L."/>
            <person name="Mundt M."/>
            <person name="Munk A.C."/>
            <person name="Okinaka R.T."/>
            <person name="Parson-Quintana B."/>
            <person name="Reilly L.P."/>
            <person name="Richardson P."/>
            <person name="Robinson D.L."/>
            <person name="Rubin E."/>
            <person name="Saunders E."/>
            <person name="Tapia R."/>
            <person name="Tesmer J.G."/>
            <person name="Thayer N."/>
            <person name="Thompson L.S."/>
            <person name="Tice H."/>
            <person name="Ticknor L.O."/>
            <person name="Wills P.L."/>
            <person name="Brettin T.S."/>
            <person name="Gilna P."/>
        </authorList>
    </citation>
    <scope>NUCLEOTIDE SEQUENCE [LARGE SCALE GENOMIC DNA]</scope>
    <source>
        <strain>97-27</strain>
    </source>
</reference>
<dbReference type="EC" id="1.1.1.27" evidence="1"/>
<dbReference type="EMBL" id="AE017355">
    <property type="protein sequence ID" value="AAT63370.1"/>
    <property type="molecule type" value="Genomic_DNA"/>
</dbReference>
<dbReference type="RefSeq" id="WP_000715326.1">
    <property type="nucleotide sequence ID" value="NC_005957.1"/>
</dbReference>
<dbReference type="RefSeq" id="YP_036095.1">
    <property type="nucleotide sequence ID" value="NC_005957.1"/>
</dbReference>
<dbReference type="SMR" id="Q6HK31"/>
<dbReference type="KEGG" id="btk:BT9727_1763"/>
<dbReference type="PATRIC" id="fig|281309.8.peg.1857"/>
<dbReference type="HOGENOM" id="CLU_045401_1_1_9"/>
<dbReference type="UniPathway" id="UPA00554">
    <property type="reaction ID" value="UER00611"/>
</dbReference>
<dbReference type="Proteomes" id="UP000001301">
    <property type="component" value="Chromosome"/>
</dbReference>
<dbReference type="GO" id="GO:0005737">
    <property type="term" value="C:cytoplasm"/>
    <property type="evidence" value="ECO:0007669"/>
    <property type="project" value="UniProtKB-SubCell"/>
</dbReference>
<dbReference type="GO" id="GO:0004459">
    <property type="term" value="F:L-lactate dehydrogenase activity"/>
    <property type="evidence" value="ECO:0007669"/>
    <property type="project" value="UniProtKB-UniRule"/>
</dbReference>
<dbReference type="GO" id="GO:0006096">
    <property type="term" value="P:glycolytic process"/>
    <property type="evidence" value="ECO:0007669"/>
    <property type="project" value="UniProtKB-UniRule"/>
</dbReference>
<dbReference type="GO" id="GO:0006089">
    <property type="term" value="P:lactate metabolic process"/>
    <property type="evidence" value="ECO:0007669"/>
    <property type="project" value="TreeGrafter"/>
</dbReference>
<dbReference type="CDD" id="cd05291">
    <property type="entry name" value="HicDH_like"/>
    <property type="match status" value="1"/>
</dbReference>
<dbReference type="FunFam" id="3.90.110.10:FF:000005">
    <property type="entry name" value="L-lactate dehydrogenase"/>
    <property type="match status" value="1"/>
</dbReference>
<dbReference type="FunFam" id="3.40.50.720:FF:000018">
    <property type="entry name" value="Malate dehydrogenase"/>
    <property type="match status" value="1"/>
</dbReference>
<dbReference type="Gene3D" id="3.90.110.10">
    <property type="entry name" value="Lactate dehydrogenase/glycoside hydrolase, family 4, C-terminal"/>
    <property type="match status" value="1"/>
</dbReference>
<dbReference type="Gene3D" id="3.40.50.720">
    <property type="entry name" value="NAD(P)-binding Rossmann-like Domain"/>
    <property type="match status" value="1"/>
</dbReference>
<dbReference type="HAMAP" id="MF_00488">
    <property type="entry name" value="Lactate_dehydrog"/>
    <property type="match status" value="1"/>
</dbReference>
<dbReference type="InterPro" id="IPR001557">
    <property type="entry name" value="L-lactate/malate_DH"/>
</dbReference>
<dbReference type="InterPro" id="IPR011304">
    <property type="entry name" value="L-lactate_DH"/>
</dbReference>
<dbReference type="InterPro" id="IPR018177">
    <property type="entry name" value="L-lactate_DH_AS"/>
</dbReference>
<dbReference type="InterPro" id="IPR022383">
    <property type="entry name" value="Lactate/malate_DH_C"/>
</dbReference>
<dbReference type="InterPro" id="IPR001236">
    <property type="entry name" value="Lactate/malate_DH_N"/>
</dbReference>
<dbReference type="InterPro" id="IPR015955">
    <property type="entry name" value="Lactate_DH/Glyco_Ohase_4_C"/>
</dbReference>
<dbReference type="InterPro" id="IPR036291">
    <property type="entry name" value="NAD(P)-bd_dom_sf"/>
</dbReference>
<dbReference type="NCBIfam" id="TIGR01771">
    <property type="entry name" value="L-LDH-NAD"/>
    <property type="match status" value="1"/>
</dbReference>
<dbReference type="NCBIfam" id="NF000824">
    <property type="entry name" value="PRK00066.1"/>
    <property type="match status" value="1"/>
</dbReference>
<dbReference type="NCBIfam" id="NF004863">
    <property type="entry name" value="PRK06223.1"/>
    <property type="match status" value="1"/>
</dbReference>
<dbReference type="PANTHER" id="PTHR43128">
    <property type="entry name" value="L-2-HYDROXYCARBOXYLATE DEHYDROGENASE (NAD(P)(+))"/>
    <property type="match status" value="1"/>
</dbReference>
<dbReference type="PANTHER" id="PTHR43128:SF16">
    <property type="entry name" value="L-LACTATE DEHYDROGENASE"/>
    <property type="match status" value="1"/>
</dbReference>
<dbReference type="Pfam" id="PF02866">
    <property type="entry name" value="Ldh_1_C"/>
    <property type="match status" value="1"/>
</dbReference>
<dbReference type="Pfam" id="PF00056">
    <property type="entry name" value="Ldh_1_N"/>
    <property type="match status" value="1"/>
</dbReference>
<dbReference type="PIRSF" id="PIRSF000102">
    <property type="entry name" value="Lac_mal_DH"/>
    <property type="match status" value="1"/>
</dbReference>
<dbReference type="PRINTS" id="PR00086">
    <property type="entry name" value="LLDHDRGNASE"/>
</dbReference>
<dbReference type="SUPFAM" id="SSF56327">
    <property type="entry name" value="LDH C-terminal domain-like"/>
    <property type="match status" value="1"/>
</dbReference>
<dbReference type="SUPFAM" id="SSF51735">
    <property type="entry name" value="NAD(P)-binding Rossmann-fold domains"/>
    <property type="match status" value="1"/>
</dbReference>
<dbReference type="PROSITE" id="PS00064">
    <property type="entry name" value="L_LDH"/>
    <property type="match status" value="1"/>
</dbReference>
<gene>
    <name evidence="1" type="primary">ldh1</name>
    <name type="ordered locus">BT9727_1763</name>
</gene>
<evidence type="ECO:0000255" key="1">
    <source>
        <dbReference type="HAMAP-Rule" id="MF_00488"/>
    </source>
</evidence>
<proteinExistence type="inferred from homology"/>
<protein>
    <recommendedName>
        <fullName evidence="1">L-lactate dehydrogenase 1</fullName>
        <shortName evidence="1">L-LDH 1</shortName>
        <ecNumber evidence="1">1.1.1.27</ecNumber>
    </recommendedName>
</protein>
<feature type="chain" id="PRO_0000237541" description="L-lactate dehydrogenase 1">
    <location>
        <begin position="1"/>
        <end position="314"/>
    </location>
</feature>
<feature type="active site" description="Proton acceptor" evidence="1">
    <location>
        <position position="178"/>
    </location>
</feature>
<feature type="binding site" evidence="1">
    <location>
        <position position="16"/>
    </location>
    <ligand>
        <name>NAD(+)</name>
        <dbReference type="ChEBI" id="CHEBI:57540"/>
    </ligand>
</feature>
<feature type="binding site" evidence="1">
    <location>
        <position position="37"/>
    </location>
    <ligand>
        <name>NAD(+)</name>
        <dbReference type="ChEBI" id="CHEBI:57540"/>
    </ligand>
</feature>
<feature type="binding site" evidence="1">
    <location>
        <position position="42"/>
    </location>
    <ligand>
        <name>NAD(+)</name>
        <dbReference type="ChEBI" id="CHEBI:57540"/>
    </ligand>
</feature>
<feature type="binding site" evidence="1">
    <location>
        <position position="68"/>
    </location>
    <ligand>
        <name>NAD(+)</name>
        <dbReference type="ChEBI" id="CHEBI:57540"/>
    </ligand>
</feature>
<feature type="binding site" evidence="1">
    <location>
        <begin position="82"/>
        <end position="83"/>
    </location>
    <ligand>
        <name>NAD(+)</name>
        <dbReference type="ChEBI" id="CHEBI:57540"/>
    </ligand>
</feature>
<feature type="binding site" evidence="1">
    <location>
        <position position="85"/>
    </location>
    <ligand>
        <name>substrate</name>
    </ligand>
</feature>
<feature type="binding site" evidence="1">
    <location>
        <position position="91"/>
    </location>
    <ligand>
        <name>substrate</name>
    </ligand>
</feature>
<feature type="binding site" evidence="1">
    <location>
        <begin position="121"/>
        <end position="123"/>
    </location>
    <ligand>
        <name>NAD(+)</name>
        <dbReference type="ChEBI" id="CHEBI:57540"/>
    </ligand>
</feature>
<feature type="binding site" evidence="1">
    <location>
        <begin position="123"/>
        <end position="126"/>
    </location>
    <ligand>
        <name>substrate</name>
    </ligand>
</feature>
<feature type="binding site" evidence="1">
    <location>
        <position position="146"/>
    </location>
    <ligand>
        <name>NAD(+)</name>
        <dbReference type="ChEBI" id="CHEBI:57540"/>
    </ligand>
</feature>
<feature type="binding site" evidence="1">
    <location>
        <begin position="151"/>
        <end position="154"/>
    </location>
    <ligand>
        <name>substrate</name>
    </ligand>
</feature>
<feature type="binding site" evidence="1">
    <location>
        <position position="156"/>
    </location>
    <ligand>
        <name>beta-D-fructose 1,6-bisphosphate</name>
        <dbReference type="ChEBI" id="CHEBI:32966"/>
        <note>allosteric activator</note>
    </ligand>
</feature>
<feature type="binding site" evidence="1">
    <location>
        <position position="171"/>
    </location>
    <ligand>
        <name>beta-D-fructose 1,6-bisphosphate</name>
        <dbReference type="ChEBI" id="CHEBI:32966"/>
        <note>allosteric activator</note>
    </ligand>
</feature>
<feature type="binding site" evidence="1">
    <location>
        <position position="232"/>
    </location>
    <ligand>
        <name>substrate</name>
    </ligand>
</feature>
<feature type="modified residue" description="Phosphotyrosine" evidence="1">
    <location>
        <position position="223"/>
    </location>
</feature>
<keyword id="KW-0021">Allosteric enzyme</keyword>
<keyword id="KW-0963">Cytoplasm</keyword>
<keyword id="KW-0520">NAD</keyword>
<keyword id="KW-0560">Oxidoreductase</keyword>
<keyword id="KW-0597">Phosphoprotein</keyword>
<name>LDH1_BACHK</name>
<organism>
    <name type="scientific">Bacillus thuringiensis subsp. konkukian (strain 97-27)</name>
    <dbReference type="NCBI Taxonomy" id="281309"/>
    <lineage>
        <taxon>Bacteria</taxon>
        <taxon>Bacillati</taxon>
        <taxon>Bacillota</taxon>
        <taxon>Bacilli</taxon>
        <taxon>Bacillales</taxon>
        <taxon>Bacillaceae</taxon>
        <taxon>Bacillus</taxon>
        <taxon>Bacillus cereus group</taxon>
    </lineage>
</organism>